<protein>
    <recommendedName>
        <fullName evidence="6 7">Formate-nitrite transporter 2</fullName>
        <shortName evidence="6 7">TgFNT2</shortName>
    </recommendedName>
</protein>
<name>FNT2_TOXGM</name>
<feature type="chain" id="PRO_0000461325" description="Formate-nitrite transporter 2">
    <location>
        <begin position="1"/>
        <end position="463"/>
    </location>
</feature>
<feature type="topological domain" description="Cytoplasmic" evidence="8">
    <location>
        <begin position="1"/>
        <end position="100"/>
    </location>
</feature>
<feature type="transmembrane region" description="Helical" evidence="2">
    <location>
        <begin position="101"/>
        <end position="121"/>
    </location>
</feature>
<feature type="topological domain" description="Extracellular" evidence="8">
    <location>
        <begin position="122"/>
        <end position="142"/>
    </location>
</feature>
<feature type="transmembrane region" description="Helical" evidence="2">
    <location>
        <begin position="143"/>
        <end position="163"/>
    </location>
</feature>
<feature type="topological domain" description="Cytoplasmic" evidence="8">
    <location>
        <begin position="164"/>
        <end position="189"/>
    </location>
</feature>
<feature type="transmembrane region" description="Helical" evidence="2">
    <location>
        <begin position="190"/>
        <end position="210"/>
    </location>
</feature>
<feature type="topological domain" description="Extracellular" evidence="8">
    <location>
        <begin position="211"/>
        <end position="237"/>
    </location>
</feature>
<feature type="transmembrane region" description="Helical" evidence="2">
    <location>
        <begin position="238"/>
        <end position="258"/>
    </location>
</feature>
<feature type="topological domain" description="Cytoplasmic" evidence="8">
    <location>
        <begin position="259"/>
        <end position="265"/>
    </location>
</feature>
<feature type="transmembrane region" description="Helical" evidence="2">
    <location>
        <begin position="266"/>
        <end position="286"/>
    </location>
</feature>
<feature type="topological domain" description="Extracellular" evidence="8">
    <location>
        <begin position="287"/>
        <end position="305"/>
    </location>
</feature>
<feature type="transmembrane region" description="Helical" evidence="2">
    <location>
        <begin position="306"/>
        <end position="326"/>
    </location>
</feature>
<feature type="topological domain" description="Cytoplasmic" evidence="4">
    <location>
        <begin position="327"/>
        <end position="463"/>
    </location>
</feature>
<feature type="region of interest" description="Disordered" evidence="3">
    <location>
        <begin position="424"/>
        <end position="463"/>
    </location>
</feature>
<feature type="compositionally biased region" description="Polar residues" evidence="3">
    <location>
        <begin position="450"/>
        <end position="463"/>
    </location>
</feature>
<feature type="mutagenesis site" description="Reduces lactate transport. Reduces sensitivity to MMV007839 inhibition." evidence="4">
    <original>G</original>
    <variation>S</variation>
    <location>
        <position position="166"/>
    </location>
</feature>
<proteinExistence type="evidence at protein level"/>
<reference evidence="10" key="1">
    <citation type="submission" date="2013-04" db="EMBL/GenBank/DDBJ databases">
        <authorList>
            <person name="Sibley D."/>
            <person name="Venepally P."/>
            <person name="Karamycheva S."/>
            <person name="Hadjithomas M."/>
            <person name="Khan A."/>
            <person name="Brunk B."/>
            <person name="Roos D."/>
            <person name="Caler E."/>
            <person name="Lorenzi H."/>
        </authorList>
    </citation>
    <scope>NUCLEOTIDE SEQUENCE [LARGE SCALE GENOMIC DNA]</scope>
    <source>
        <strain evidence="10">ATCC 50611 / Me49</strain>
    </source>
</reference>
<reference evidence="8" key="2">
    <citation type="journal article" date="2018" name="J. Biol. Chem.">
        <title>The intracellular parasite Toxoplasma gondii harbors three druggable FNT-type formate and l-lactate transporters in the plasma membrane.</title>
        <authorList>
            <person name="Erler H."/>
            <person name="Ren B."/>
            <person name="Gupta N."/>
            <person name="Beitz E."/>
        </authorList>
    </citation>
    <scope>FUNCTION</scope>
    <scope>TRANSPORTER ACTIVITY</scope>
    <scope>ACTIVITY REGULATION</scope>
    <scope>SUBCELLULAR LOCATION</scope>
    <scope>TOPOLOGY</scope>
    <scope>MUTAGENESIS OF GLY-166</scope>
</reference>
<reference evidence="8" key="3">
    <citation type="journal article" date="2021" name="Sci. Rep.">
        <title>Identifying the major lactate transporter of Toxoplasma gondii tachyzoites.</title>
        <authorList>
            <person name="Zeng J.M."/>
            <person name="Hapuarachchi S.V."/>
            <person name="Shafik S.H."/>
            <person name="Martin R.E."/>
            <person name="Kirk K."/>
            <person name="van Dooren G.G."/>
            <person name="Lehane A.M."/>
        </authorList>
    </citation>
    <scope>SUBCELLULAR LOCATION</scope>
</reference>
<gene>
    <name evidence="9" type="ORF">TGME49_292110</name>
</gene>
<accession>S8EXD2</accession>
<accession>A0A0N5E9A6</accession>
<accession>V4Z102</accession>
<evidence type="ECO:0000250" key="1">
    <source>
        <dbReference type="UniProtKB" id="O77389"/>
    </source>
</evidence>
<evidence type="ECO:0000255" key="2"/>
<evidence type="ECO:0000256" key="3">
    <source>
        <dbReference type="SAM" id="MobiDB-lite"/>
    </source>
</evidence>
<evidence type="ECO:0000269" key="4">
    <source>
    </source>
</evidence>
<evidence type="ECO:0000269" key="5">
    <source>
    </source>
</evidence>
<evidence type="ECO:0000303" key="6">
    <source>
    </source>
</evidence>
<evidence type="ECO:0000303" key="7">
    <source>
    </source>
</evidence>
<evidence type="ECO:0000305" key="8"/>
<evidence type="ECO:0000312" key="9">
    <source>
        <dbReference type="EMBL" id="EPT28121.1"/>
    </source>
</evidence>
<evidence type="ECO:0000312" key="10">
    <source>
        <dbReference type="Proteomes" id="UP000001529"/>
    </source>
</evidence>
<sequence length="463" mass="50880">MCSIPPLRLLEVVDDLTCLVNSSQYSRWNFFTFTLPGFTLPMRKEFTSSCKGSFSNHPVPDHPCKLVVFFRPKMVVTAGADAYLKILEYGVKKTQLRIDRLLLQAFMAGIFVAMAGHCCTVLAGSYPTDPGDPLAVAKPTQKFIYGALFPVAFICIILTGAELFTGNTMTMLICYFQKRVTMLQLGVNWLGSLAGNWLGALFGAYFLSYLTGALGDEHVRQFLFRTCVNKISYGWGECFLRGVGCNTFVCLAVWAVIASENVAGKVLVMWFPIVAFCVGGYEHIIANMYTLQAGLMAGAPVAILDVIAFNFLPTLLGNIVGGCLLVGAVYAYNFYPTLSYTETTGAKVYVQEVGPVLDRRSSMQVSMTEREPDGQVVTEYEAVPFESFGGEYIVNKHATMAAPIPSRASSFLYPFQWQRQRSQSGNLSTHARLDLPNRPVEPPSDGLEVTPQSQTAESVAQQV</sequence>
<organism evidence="10">
    <name type="scientific">Toxoplasma gondii (strain ATCC 50611 / Me49)</name>
    <dbReference type="NCBI Taxonomy" id="508771"/>
    <lineage>
        <taxon>Eukaryota</taxon>
        <taxon>Sar</taxon>
        <taxon>Alveolata</taxon>
        <taxon>Apicomplexa</taxon>
        <taxon>Conoidasida</taxon>
        <taxon>Coccidia</taxon>
        <taxon>Eucoccidiorida</taxon>
        <taxon>Eimeriorina</taxon>
        <taxon>Sarcocystidae</taxon>
        <taxon>Toxoplasma</taxon>
    </lineage>
</organism>
<comment type="function">
    <text evidence="4">Monocarboxylate-proton symporter; active in acidic-to-neutral pH range (PubMed:30237165). Transports L-lactate and formate (PubMed:30237165).</text>
</comment>
<comment type="catalytic activity">
    <reaction evidence="4">
        <text>(S)-lactate(in) + H(+)(in) = (S)-lactate(out) + H(+)(out)</text>
        <dbReference type="Rhea" id="RHEA:29415"/>
        <dbReference type="ChEBI" id="CHEBI:15378"/>
        <dbReference type="ChEBI" id="CHEBI:16651"/>
    </reaction>
</comment>
<comment type="catalytic activity">
    <reaction evidence="4">
        <text>formate(in) + H(+)(in) = formate(out) + H(+)(out)</text>
        <dbReference type="Rhea" id="RHEA:80887"/>
        <dbReference type="ChEBI" id="CHEBI:15378"/>
        <dbReference type="ChEBI" id="CHEBI:15740"/>
    </reaction>
</comment>
<comment type="catalytic activity">
    <reaction evidence="1">
        <text>pyruvate(out) + H(+)(out) = pyruvate(in) + H(+)(in)</text>
        <dbReference type="Rhea" id="RHEA:64720"/>
        <dbReference type="ChEBI" id="CHEBI:15361"/>
        <dbReference type="ChEBI" id="CHEBI:15378"/>
    </reaction>
</comment>
<comment type="catalytic activity">
    <reaction evidence="1">
        <text>acetate(out) + H(+)(out) = acetate(in) + H(+)(in)</text>
        <dbReference type="Rhea" id="RHEA:71803"/>
        <dbReference type="ChEBI" id="CHEBI:15378"/>
        <dbReference type="ChEBI" id="CHEBI:30089"/>
    </reaction>
</comment>
<comment type="activity regulation">
    <text evidence="4">Inhibited by p-chloromercuribenzene sulfonate (pCMBS) (PubMed:30237165). Methyl methanethiosulfonate (MMTS) inhibits L-lactate but not formate transport (PubMed:30237165). Inhibited by the Malaria Box compound MMV007839 (PubMed:30237165). Inhibited by BH-296, BH-317, BH-326 and BH-388 compounds (PubMed:30237165).</text>
</comment>
<comment type="subunit">
    <text evidence="1">Homopentamer.</text>
</comment>
<comment type="subcellular location">
    <subcellularLocation>
        <location evidence="4 5">Cell membrane</location>
        <topology evidence="2">Multi-pass membrane protein</topology>
    </subcellularLocation>
</comment>
<comment type="miscellaneous">
    <text evidence="4 5">Inhibitors modestly slow the asexual reproduction of parasites (PubMed:30237165). Frameshift mutations that are likely to render the resulting proteins non-functional, have no significant effects on tachyzoite proliferation in vitro (PubMed:33762657).</text>
</comment>
<comment type="similarity">
    <text evidence="8">Belongs to the FNT transporter (TC 1.A.16) family.</text>
</comment>
<keyword id="KW-1003">Cell membrane</keyword>
<keyword id="KW-0472">Membrane</keyword>
<keyword id="KW-1185">Reference proteome</keyword>
<keyword id="KW-0812">Transmembrane</keyword>
<keyword id="KW-1133">Transmembrane helix</keyword>
<dbReference type="EMBL" id="KE138832">
    <property type="protein sequence ID" value="EPT28121.1"/>
    <property type="molecule type" value="Genomic_DNA"/>
</dbReference>
<dbReference type="RefSeq" id="XP_018636482.1">
    <property type="nucleotide sequence ID" value="XM_018782158.1"/>
</dbReference>
<dbReference type="SMR" id="S8EXD2"/>
<dbReference type="EnsemblProtists" id="TGME49_292110-t26_1">
    <property type="protein sequence ID" value="TGME49_292110-t26_1"/>
    <property type="gene ID" value="TGME49_292110"/>
</dbReference>
<dbReference type="GeneID" id="7896491"/>
<dbReference type="KEGG" id="tgo:TGME49_292110"/>
<dbReference type="VEuPathDB" id="ToxoDB:TGME49_292110"/>
<dbReference type="OrthoDB" id="331088at2759"/>
<dbReference type="PhylomeDB" id="S8EXD2"/>
<dbReference type="Proteomes" id="UP000001529">
    <property type="component" value="Chromosome IX"/>
</dbReference>
<dbReference type="GO" id="GO:0005886">
    <property type="term" value="C:plasma membrane"/>
    <property type="evidence" value="ECO:0007669"/>
    <property type="project" value="UniProtKB-SubCell"/>
</dbReference>
<dbReference type="GO" id="GO:0015513">
    <property type="term" value="F:high-affinity secondary active nitrite transmembrane transporter activity"/>
    <property type="evidence" value="ECO:0007669"/>
    <property type="project" value="TreeGrafter"/>
</dbReference>
<dbReference type="GO" id="GO:0015707">
    <property type="term" value="P:nitrite transport"/>
    <property type="evidence" value="ECO:0007669"/>
    <property type="project" value="TreeGrafter"/>
</dbReference>
<dbReference type="Gene3D" id="1.20.1080.10">
    <property type="entry name" value="Glycerol uptake facilitator protein"/>
    <property type="match status" value="1"/>
</dbReference>
<dbReference type="InterPro" id="IPR023271">
    <property type="entry name" value="Aquaporin-like"/>
</dbReference>
<dbReference type="InterPro" id="IPR000292">
    <property type="entry name" value="For/NO2_transpt"/>
</dbReference>
<dbReference type="InterPro" id="IPR024002">
    <property type="entry name" value="For/NO2_transpt_CS"/>
</dbReference>
<dbReference type="PANTHER" id="PTHR30520">
    <property type="entry name" value="FORMATE TRANSPORTER-RELATED"/>
    <property type="match status" value="1"/>
</dbReference>
<dbReference type="PANTHER" id="PTHR30520:SF6">
    <property type="entry name" value="FORMATE_NITRATE FAMILY TRANSPORTER (EUROFUNG)"/>
    <property type="match status" value="1"/>
</dbReference>
<dbReference type="Pfam" id="PF01226">
    <property type="entry name" value="Form_Nir_trans"/>
    <property type="match status" value="1"/>
</dbReference>
<dbReference type="PROSITE" id="PS01005">
    <property type="entry name" value="FORMATE_NITRITE_TP_1"/>
    <property type="match status" value="1"/>
</dbReference>